<gene>
    <name type="primary">oplah</name>
    <name type="ORF">DDB_G0284953</name>
</gene>
<name>OPLA_DICDI</name>
<reference key="1">
    <citation type="journal article" date="2005" name="Nature">
        <title>The genome of the social amoeba Dictyostelium discoideum.</title>
        <authorList>
            <person name="Eichinger L."/>
            <person name="Pachebat J.A."/>
            <person name="Gloeckner G."/>
            <person name="Rajandream M.A."/>
            <person name="Sucgang R."/>
            <person name="Berriman M."/>
            <person name="Song J."/>
            <person name="Olsen R."/>
            <person name="Szafranski K."/>
            <person name="Xu Q."/>
            <person name="Tunggal B."/>
            <person name="Kummerfeld S."/>
            <person name="Madera M."/>
            <person name="Konfortov B.A."/>
            <person name="Rivero F."/>
            <person name="Bankier A.T."/>
            <person name="Lehmann R."/>
            <person name="Hamlin N."/>
            <person name="Davies R."/>
            <person name="Gaudet P."/>
            <person name="Fey P."/>
            <person name="Pilcher K."/>
            <person name="Chen G."/>
            <person name="Saunders D."/>
            <person name="Sodergren E.J."/>
            <person name="Davis P."/>
            <person name="Kerhornou A."/>
            <person name="Nie X."/>
            <person name="Hall N."/>
            <person name="Anjard C."/>
            <person name="Hemphill L."/>
            <person name="Bason N."/>
            <person name="Farbrother P."/>
            <person name="Desany B."/>
            <person name="Just E."/>
            <person name="Morio T."/>
            <person name="Rost R."/>
            <person name="Churcher C.M."/>
            <person name="Cooper J."/>
            <person name="Haydock S."/>
            <person name="van Driessche N."/>
            <person name="Cronin A."/>
            <person name="Goodhead I."/>
            <person name="Muzny D.M."/>
            <person name="Mourier T."/>
            <person name="Pain A."/>
            <person name="Lu M."/>
            <person name="Harper D."/>
            <person name="Lindsay R."/>
            <person name="Hauser H."/>
            <person name="James K.D."/>
            <person name="Quiles M."/>
            <person name="Madan Babu M."/>
            <person name="Saito T."/>
            <person name="Buchrieser C."/>
            <person name="Wardroper A."/>
            <person name="Felder M."/>
            <person name="Thangavelu M."/>
            <person name="Johnson D."/>
            <person name="Knights A."/>
            <person name="Loulseged H."/>
            <person name="Mungall K.L."/>
            <person name="Oliver K."/>
            <person name="Price C."/>
            <person name="Quail M.A."/>
            <person name="Urushihara H."/>
            <person name="Hernandez J."/>
            <person name="Rabbinowitsch E."/>
            <person name="Steffen D."/>
            <person name="Sanders M."/>
            <person name="Ma J."/>
            <person name="Kohara Y."/>
            <person name="Sharp S."/>
            <person name="Simmonds M.N."/>
            <person name="Spiegler S."/>
            <person name="Tivey A."/>
            <person name="Sugano S."/>
            <person name="White B."/>
            <person name="Walker D."/>
            <person name="Woodward J.R."/>
            <person name="Winckler T."/>
            <person name="Tanaka Y."/>
            <person name="Shaulsky G."/>
            <person name="Schleicher M."/>
            <person name="Weinstock G.M."/>
            <person name="Rosenthal A."/>
            <person name="Cox E.C."/>
            <person name="Chisholm R.L."/>
            <person name="Gibbs R.A."/>
            <person name="Loomis W.F."/>
            <person name="Platzer M."/>
            <person name="Kay R.R."/>
            <person name="Williams J.G."/>
            <person name="Dear P.H."/>
            <person name="Noegel A.A."/>
            <person name="Barrell B.G."/>
            <person name="Kuspa A."/>
        </authorList>
    </citation>
    <scope>NUCLEOTIDE SEQUENCE [LARGE SCALE GENOMIC DNA]</scope>
    <source>
        <strain>AX4</strain>
    </source>
</reference>
<proteinExistence type="inferred from homology"/>
<feature type="chain" id="PRO_0000328515" description="5-oxoprolinase">
    <location>
        <begin position="1"/>
        <end position="1265"/>
    </location>
</feature>
<keyword id="KW-0067">ATP-binding</keyword>
<keyword id="KW-0963">Cytoplasm</keyword>
<keyword id="KW-0378">Hydrolase</keyword>
<keyword id="KW-0547">Nucleotide-binding</keyword>
<keyword id="KW-1185">Reference proteome</keyword>
<accession>Q54NW6</accession>
<protein>
    <recommendedName>
        <fullName>5-oxoprolinase</fullName>
        <ecNumber evidence="2">3.5.2.9</ecNumber>
    </recommendedName>
    <alternativeName>
        <fullName>5-oxo-L-prolinase</fullName>
        <shortName>5-OPase</shortName>
    </alternativeName>
    <alternativeName>
        <fullName>Pyroglutamase</fullName>
    </alternativeName>
</protein>
<comment type="function">
    <text evidence="2">Catalyzes the cleavage of 5-oxo-L-proline to form L-glutamate coupled to the hydrolysis of ATP to ADP and inorganic phosphate.</text>
</comment>
<comment type="catalytic activity">
    <reaction evidence="2">
        <text>5-oxo-L-proline + ATP + 2 H2O = L-glutamate + ADP + phosphate + H(+)</text>
        <dbReference type="Rhea" id="RHEA:10348"/>
        <dbReference type="ChEBI" id="CHEBI:15377"/>
        <dbReference type="ChEBI" id="CHEBI:15378"/>
        <dbReference type="ChEBI" id="CHEBI:29985"/>
        <dbReference type="ChEBI" id="CHEBI:30616"/>
        <dbReference type="ChEBI" id="CHEBI:43474"/>
        <dbReference type="ChEBI" id="CHEBI:58402"/>
        <dbReference type="ChEBI" id="CHEBI:456216"/>
        <dbReference type="EC" id="3.5.2.9"/>
    </reaction>
</comment>
<comment type="subunit">
    <text evidence="1">Homodimer.</text>
</comment>
<comment type="subcellular location">
    <subcellularLocation>
        <location evidence="2">Cytoplasm</location>
        <location evidence="2">Cytosol</location>
    </subcellularLocation>
</comment>
<comment type="similarity">
    <text evidence="3">Belongs to the oxoprolinase family.</text>
</comment>
<evidence type="ECO:0000250" key="1"/>
<evidence type="ECO:0000250" key="2">
    <source>
        <dbReference type="UniProtKB" id="Q75WB5"/>
    </source>
</evidence>
<evidence type="ECO:0000305" key="3"/>
<dbReference type="EC" id="3.5.2.9" evidence="2"/>
<dbReference type="EMBL" id="AAFI02000073">
    <property type="protein sequence ID" value="EAL64940.2"/>
    <property type="molecule type" value="Genomic_DNA"/>
</dbReference>
<dbReference type="RefSeq" id="XP_639951.2">
    <property type="nucleotide sequence ID" value="XM_634859.2"/>
</dbReference>
<dbReference type="SMR" id="Q54NW6"/>
<dbReference type="FunCoup" id="Q54NW6">
    <property type="interactions" value="96"/>
</dbReference>
<dbReference type="STRING" id="44689.Q54NW6"/>
<dbReference type="PaxDb" id="44689-DDB0304678"/>
<dbReference type="EnsemblProtists" id="EAL64940">
    <property type="protein sequence ID" value="EAL64940"/>
    <property type="gene ID" value="DDB_G0284953"/>
</dbReference>
<dbReference type="GeneID" id="8624863"/>
<dbReference type="KEGG" id="ddi:DDB_G0284953"/>
<dbReference type="dictyBase" id="DDB_G0284953">
    <property type="gene designation" value="oplah"/>
</dbReference>
<dbReference type="VEuPathDB" id="AmoebaDB:DDB_G0284953"/>
<dbReference type="eggNOG" id="KOG1939">
    <property type="taxonomic scope" value="Eukaryota"/>
</dbReference>
<dbReference type="HOGENOM" id="CLU_002157_0_0_1"/>
<dbReference type="InParanoid" id="Q54NW6"/>
<dbReference type="OMA" id="TDCNVML"/>
<dbReference type="PhylomeDB" id="Q54NW6"/>
<dbReference type="Reactome" id="R-DDI-174403">
    <property type="pathway name" value="Glutathione synthesis and recycling"/>
</dbReference>
<dbReference type="PRO" id="PR:Q54NW6"/>
<dbReference type="Proteomes" id="UP000002195">
    <property type="component" value="Chromosome 4"/>
</dbReference>
<dbReference type="GO" id="GO:0005829">
    <property type="term" value="C:cytosol"/>
    <property type="evidence" value="ECO:0000250"/>
    <property type="project" value="UniProtKB"/>
</dbReference>
<dbReference type="GO" id="GO:0017168">
    <property type="term" value="F:5-oxoprolinase (ATP-hydrolyzing) activity"/>
    <property type="evidence" value="ECO:0000250"/>
    <property type="project" value="UniProtKB"/>
</dbReference>
<dbReference type="GO" id="GO:0005524">
    <property type="term" value="F:ATP binding"/>
    <property type="evidence" value="ECO:0007669"/>
    <property type="project" value="UniProtKB-KW"/>
</dbReference>
<dbReference type="GO" id="GO:0006749">
    <property type="term" value="P:glutathione metabolic process"/>
    <property type="evidence" value="ECO:0000318"/>
    <property type="project" value="GO_Central"/>
</dbReference>
<dbReference type="InterPro" id="IPR008040">
    <property type="entry name" value="Hydant_A_N"/>
</dbReference>
<dbReference type="InterPro" id="IPR002821">
    <property type="entry name" value="Hydantoinase_A"/>
</dbReference>
<dbReference type="InterPro" id="IPR003692">
    <property type="entry name" value="Hydantoinase_B"/>
</dbReference>
<dbReference type="InterPro" id="IPR045079">
    <property type="entry name" value="Oxoprolinase-like"/>
</dbReference>
<dbReference type="PANTHER" id="PTHR11365:SF2">
    <property type="entry name" value="5-OXOPROLINASE"/>
    <property type="match status" value="1"/>
</dbReference>
<dbReference type="PANTHER" id="PTHR11365">
    <property type="entry name" value="5-OXOPROLINASE RELATED"/>
    <property type="match status" value="1"/>
</dbReference>
<dbReference type="Pfam" id="PF05378">
    <property type="entry name" value="Hydant_A_N"/>
    <property type="match status" value="1"/>
</dbReference>
<dbReference type="Pfam" id="PF01968">
    <property type="entry name" value="Hydantoinase_A"/>
    <property type="match status" value="1"/>
</dbReference>
<dbReference type="Pfam" id="PF02538">
    <property type="entry name" value="Hydantoinase_B"/>
    <property type="match status" value="1"/>
</dbReference>
<organism>
    <name type="scientific">Dictyostelium discoideum</name>
    <name type="common">Social amoeba</name>
    <dbReference type="NCBI Taxonomy" id="44689"/>
    <lineage>
        <taxon>Eukaryota</taxon>
        <taxon>Amoebozoa</taxon>
        <taxon>Evosea</taxon>
        <taxon>Eumycetozoa</taxon>
        <taxon>Dictyostelia</taxon>
        <taxon>Dictyosteliales</taxon>
        <taxon>Dictyosteliaceae</taxon>
        <taxon>Dictyostelium</taxon>
    </lineage>
</organism>
<sequence length="1265" mass="138977">MTIDKLKKSIKFNIDRGGTFTDIYAEFPYEPYYIVEKLLSVDPENYSDAPREGIRRILERIQGKSISKENVDTYAIKSIRMGTTVGTNALLERKGEKVLLVTSKGFRDLLQIGNQSRPKIFELNITKPELIYNSVVELDERVQIVTNDQVLNDIKLESPNSLKKGTTGDYIKVLEIPNRDKIKSELLKYFVKGIKSIAVVFIHSYTFHDHELLVGEIAKEIGFEHISLSHQLMPMIKAVPRGLTSCVDAYLTPLIELYIKNFTKGFDSNIGDVDISFMMSDGGLCPVDSFRGFRSILSGPAGGVVGYSKTTSTVIESHKNNNGNNEIKQQPIIGFDMGGTSTDVSRYNGTLDHVFETEISGLTIQAPQLDIHTVAAGGGSRLFFKSGLFLVGPESVGAHPGPVCYKKNGQLAITDANLLLGRLLPEYFPPIFGPNQNEPLDLEATKKAFKELTDEINQFQQNNNLPLMTEDQVAFGFIRVANEAMCRPIRNITEAKGFDCSQHVLACFGGAGGQHSCSIAQNLGMPKVFIHRFSGILSAYGLGLADLVIDTQEPCSLIYNKENKSTFEKQLNQLKENAKQQLLNKGFPEEEIFCEGFLNLRFSGTDTAMMIKTPDNHDYEAEFKSNYKREFGFLILGRDLLIDDIRVRVHARGSDLNSLRINDSTGEPLKPETIQKCYFESVGRIDTPIYLLKSLCGGDSIDGPAIIIDNTTTIVVEPNCKANILKPSGNIEILIGGGKSKTVTTELDPIMLSVFSHRFMSIAEQMGKIIIRTSISTNIKERLDFSCALFSPDGGLVANAPAIPIHVGSMQNAVKYQVETLGSNWKEGEVVLSNHPQAGGSHLPDLTVMTPVYHKGEIVFFVASRGHHADIGGITPGSMPPFSKSISEEGAAIMSLKIVKDGHFQEEAVRKTFEKSRNLSDNISDLKAQIAANHKGIQLMQELINHYGLDVVHAYMYHIQKNAELAVRDMLYDISISNNLKPLDTLISTDYMDDGSKIELKLTIDREKKSAIFDWSGSGVEVYGNTNAPTSITLSATIYSLRAMVKSEIPLNQGCLAPILTVIPPGSILNPSFDSAVVGGNVLTSQRLTDVILSAFGACANSQGCMNNLTFGDETLGYYETIAGGTGAGPNFNGFTAVQSHMTNTRITDVEIMEKRYPVIVKEFSVRYGSGGDGKFKGGDGVVREIQFLKNFTVSILSERRSLQPRGLMGGENAERGLNLVLKNNGKYINIGSKNSINIERNESIIIFTPGGGGFGQKDSMITDN</sequence>